<name>RL22_VIBCH</name>
<evidence type="ECO:0000255" key="1">
    <source>
        <dbReference type="HAMAP-Rule" id="MF_01331"/>
    </source>
</evidence>
<evidence type="ECO:0000305" key="2"/>
<reference key="1">
    <citation type="journal article" date="2000" name="Nature">
        <title>DNA sequence of both chromosomes of the cholera pathogen Vibrio cholerae.</title>
        <authorList>
            <person name="Heidelberg J.F."/>
            <person name="Eisen J.A."/>
            <person name="Nelson W.C."/>
            <person name="Clayton R.A."/>
            <person name="Gwinn M.L."/>
            <person name="Dodson R.J."/>
            <person name="Haft D.H."/>
            <person name="Hickey E.K."/>
            <person name="Peterson J.D."/>
            <person name="Umayam L.A."/>
            <person name="Gill S.R."/>
            <person name="Nelson K.E."/>
            <person name="Read T.D."/>
            <person name="Tettelin H."/>
            <person name="Richardson D.L."/>
            <person name="Ermolaeva M.D."/>
            <person name="Vamathevan J.J."/>
            <person name="Bass S."/>
            <person name="Qin H."/>
            <person name="Dragoi I."/>
            <person name="Sellers P."/>
            <person name="McDonald L.A."/>
            <person name="Utterback T.R."/>
            <person name="Fleischmann R.D."/>
            <person name="Nierman W.C."/>
            <person name="White O."/>
            <person name="Salzberg S.L."/>
            <person name="Smith H.O."/>
            <person name="Colwell R.R."/>
            <person name="Mekalanos J.J."/>
            <person name="Venter J.C."/>
            <person name="Fraser C.M."/>
        </authorList>
    </citation>
    <scope>NUCLEOTIDE SEQUENCE [LARGE SCALE GENOMIC DNA]</scope>
    <source>
        <strain>ATCC 39315 / El Tor Inaba N16961</strain>
    </source>
</reference>
<sequence length="110" mass="12198">MEAIAKHNFARISPQKARLVADQIRGKSVDQALELLTFSNKKAAELVKKVLESAIANAEHNEGADIDDLRVAKIFVDEGPVMKRIMPRAKGRADRILKRSSHITVVVADR</sequence>
<accession>Q9KNY9</accession>
<gene>
    <name evidence="1" type="primary">rplV</name>
    <name type="ordered locus">VC_2591</name>
</gene>
<organism>
    <name type="scientific">Vibrio cholerae serotype O1 (strain ATCC 39315 / El Tor Inaba N16961)</name>
    <dbReference type="NCBI Taxonomy" id="243277"/>
    <lineage>
        <taxon>Bacteria</taxon>
        <taxon>Pseudomonadati</taxon>
        <taxon>Pseudomonadota</taxon>
        <taxon>Gammaproteobacteria</taxon>
        <taxon>Vibrionales</taxon>
        <taxon>Vibrionaceae</taxon>
        <taxon>Vibrio</taxon>
    </lineage>
</organism>
<protein>
    <recommendedName>
        <fullName evidence="1">Large ribosomal subunit protein uL22</fullName>
    </recommendedName>
    <alternativeName>
        <fullName evidence="2">50S ribosomal protein L22</fullName>
    </alternativeName>
</protein>
<dbReference type="EMBL" id="AE003852">
    <property type="protein sequence ID" value="AAF95732.1"/>
    <property type="molecule type" value="Genomic_DNA"/>
</dbReference>
<dbReference type="PIR" id="A82059">
    <property type="entry name" value="A82059"/>
</dbReference>
<dbReference type="RefSeq" id="NP_232219.1">
    <property type="nucleotide sequence ID" value="NC_002505.1"/>
</dbReference>
<dbReference type="RefSeq" id="WP_000387269.1">
    <property type="nucleotide sequence ID" value="NZ_LT906614.1"/>
</dbReference>
<dbReference type="SMR" id="Q9KNY9"/>
<dbReference type="STRING" id="243277.VC_2591"/>
<dbReference type="DNASU" id="2615608"/>
<dbReference type="EnsemblBacteria" id="AAF95732">
    <property type="protein sequence ID" value="AAF95732"/>
    <property type="gene ID" value="VC_2591"/>
</dbReference>
<dbReference type="GeneID" id="94012757"/>
<dbReference type="KEGG" id="vch:VC_2591"/>
<dbReference type="PATRIC" id="fig|243277.26.peg.2470"/>
<dbReference type="eggNOG" id="COG0091">
    <property type="taxonomic scope" value="Bacteria"/>
</dbReference>
<dbReference type="HOGENOM" id="CLU_083987_3_3_6"/>
<dbReference type="Proteomes" id="UP000000584">
    <property type="component" value="Chromosome 1"/>
</dbReference>
<dbReference type="GO" id="GO:0022625">
    <property type="term" value="C:cytosolic large ribosomal subunit"/>
    <property type="evidence" value="ECO:0000318"/>
    <property type="project" value="GO_Central"/>
</dbReference>
<dbReference type="GO" id="GO:0019843">
    <property type="term" value="F:rRNA binding"/>
    <property type="evidence" value="ECO:0007669"/>
    <property type="project" value="UniProtKB-UniRule"/>
</dbReference>
<dbReference type="GO" id="GO:0003735">
    <property type="term" value="F:structural constituent of ribosome"/>
    <property type="evidence" value="ECO:0000318"/>
    <property type="project" value="GO_Central"/>
</dbReference>
<dbReference type="GO" id="GO:0006412">
    <property type="term" value="P:translation"/>
    <property type="evidence" value="ECO:0000318"/>
    <property type="project" value="GO_Central"/>
</dbReference>
<dbReference type="CDD" id="cd00336">
    <property type="entry name" value="Ribosomal_L22"/>
    <property type="match status" value="1"/>
</dbReference>
<dbReference type="FunFam" id="3.90.470.10:FF:000001">
    <property type="entry name" value="50S ribosomal protein L22"/>
    <property type="match status" value="1"/>
</dbReference>
<dbReference type="Gene3D" id="3.90.470.10">
    <property type="entry name" value="Ribosomal protein L22/L17"/>
    <property type="match status" value="1"/>
</dbReference>
<dbReference type="HAMAP" id="MF_01331_B">
    <property type="entry name" value="Ribosomal_uL22_B"/>
    <property type="match status" value="1"/>
</dbReference>
<dbReference type="InterPro" id="IPR001063">
    <property type="entry name" value="Ribosomal_uL22"/>
</dbReference>
<dbReference type="InterPro" id="IPR005727">
    <property type="entry name" value="Ribosomal_uL22_bac/chlpt-type"/>
</dbReference>
<dbReference type="InterPro" id="IPR047867">
    <property type="entry name" value="Ribosomal_uL22_bac/org-type"/>
</dbReference>
<dbReference type="InterPro" id="IPR018260">
    <property type="entry name" value="Ribosomal_uL22_CS"/>
</dbReference>
<dbReference type="InterPro" id="IPR036394">
    <property type="entry name" value="Ribosomal_uL22_sf"/>
</dbReference>
<dbReference type="NCBIfam" id="TIGR01044">
    <property type="entry name" value="rplV_bact"/>
    <property type="match status" value="1"/>
</dbReference>
<dbReference type="PANTHER" id="PTHR13501">
    <property type="entry name" value="CHLOROPLAST 50S RIBOSOMAL PROTEIN L22-RELATED"/>
    <property type="match status" value="1"/>
</dbReference>
<dbReference type="PANTHER" id="PTHR13501:SF8">
    <property type="entry name" value="LARGE RIBOSOMAL SUBUNIT PROTEIN UL22M"/>
    <property type="match status" value="1"/>
</dbReference>
<dbReference type="Pfam" id="PF00237">
    <property type="entry name" value="Ribosomal_L22"/>
    <property type="match status" value="1"/>
</dbReference>
<dbReference type="SUPFAM" id="SSF54843">
    <property type="entry name" value="Ribosomal protein L22"/>
    <property type="match status" value="1"/>
</dbReference>
<dbReference type="PROSITE" id="PS00464">
    <property type="entry name" value="RIBOSOMAL_L22"/>
    <property type="match status" value="1"/>
</dbReference>
<comment type="function">
    <text evidence="1">This protein binds specifically to 23S rRNA; its binding is stimulated by other ribosomal proteins, e.g. L4, L17, and L20. It is important during the early stages of 50S assembly. It makes multiple contacts with different domains of the 23S rRNA in the assembled 50S subunit and ribosome (By similarity).</text>
</comment>
<comment type="function">
    <text evidence="1">The globular domain of the protein is located near the polypeptide exit tunnel on the outside of the subunit, while an extended beta-hairpin is found that lines the wall of the exit tunnel in the center of the 70S ribosome.</text>
</comment>
<comment type="subunit">
    <text evidence="1">Part of the 50S ribosomal subunit.</text>
</comment>
<comment type="similarity">
    <text evidence="1">Belongs to the universal ribosomal protein uL22 family.</text>
</comment>
<keyword id="KW-1185">Reference proteome</keyword>
<keyword id="KW-0687">Ribonucleoprotein</keyword>
<keyword id="KW-0689">Ribosomal protein</keyword>
<keyword id="KW-0694">RNA-binding</keyword>
<keyword id="KW-0699">rRNA-binding</keyword>
<feature type="chain" id="PRO_0000125258" description="Large ribosomal subunit protein uL22">
    <location>
        <begin position="1"/>
        <end position="110"/>
    </location>
</feature>
<proteinExistence type="inferred from homology"/>